<organism>
    <name type="scientific">Acetivibrio thermocellus (strain ATCC 27405 / DSM 1237 / JCM 9322 / NBRC 103400 / NCIMB 10682 / NRRL B-4536 / VPI 7372)</name>
    <name type="common">Clostridium thermocellum</name>
    <dbReference type="NCBI Taxonomy" id="203119"/>
    <lineage>
        <taxon>Bacteria</taxon>
        <taxon>Bacillati</taxon>
        <taxon>Bacillota</taxon>
        <taxon>Clostridia</taxon>
        <taxon>Eubacteriales</taxon>
        <taxon>Oscillospiraceae</taxon>
        <taxon>Acetivibrio</taxon>
    </lineage>
</organism>
<keyword id="KW-0963">Cytoplasm</keyword>
<keyword id="KW-0328">Glycosyltransferase</keyword>
<keyword id="KW-0660">Purine salvage</keyword>
<keyword id="KW-1185">Reference proteome</keyword>
<keyword id="KW-0808">Transferase</keyword>
<proteinExistence type="inferred from homology"/>
<gene>
    <name evidence="1" type="primary">apt</name>
    <name type="ordered locus">Cthe_1345</name>
</gene>
<feature type="chain" id="PRO_1000000277" description="Adenine phosphoribosyltransferase">
    <location>
        <begin position="1"/>
        <end position="171"/>
    </location>
</feature>
<name>APT_ACET2</name>
<accession>A3DF48</accession>
<comment type="function">
    <text evidence="1">Catalyzes a salvage reaction resulting in the formation of AMP, that is energically less costly than de novo synthesis.</text>
</comment>
<comment type="catalytic activity">
    <reaction evidence="1">
        <text>AMP + diphosphate = 5-phospho-alpha-D-ribose 1-diphosphate + adenine</text>
        <dbReference type="Rhea" id="RHEA:16609"/>
        <dbReference type="ChEBI" id="CHEBI:16708"/>
        <dbReference type="ChEBI" id="CHEBI:33019"/>
        <dbReference type="ChEBI" id="CHEBI:58017"/>
        <dbReference type="ChEBI" id="CHEBI:456215"/>
        <dbReference type="EC" id="2.4.2.7"/>
    </reaction>
</comment>
<comment type="pathway">
    <text evidence="1">Purine metabolism; AMP biosynthesis via salvage pathway; AMP from adenine: step 1/1.</text>
</comment>
<comment type="subunit">
    <text evidence="1">Homodimer.</text>
</comment>
<comment type="subcellular location">
    <subcellularLocation>
        <location evidence="1">Cytoplasm</location>
    </subcellularLocation>
</comment>
<comment type="similarity">
    <text evidence="1">Belongs to the purine/pyrimidine phosphoribosyltransferase family.</text>
</comment>
<protein>
    <recommendedName>
        <fullName evidence="1">Adenine phosphoribosyltransferase</fullName>
        <shortName evidence="1">APRT</shortName>
        <ecNumber evidence="1">2.4.2.7</ecNumber>
    </recommendedName>
</protein>
<evidence type="ECO:0000255" key="1">
    <source>
        <dbReference type="HAMAP-Rule" id="MF_00004"/>
    </source>
</evidence>
<reference key="1">
    <citation type="submission" date="2007-02" db="EMBL/GenBank/DDBJ databases">
        <title>Complete sequence of Clostridium thermocellum ATCC 27405.</title>
        <authorList>
            <consortium name="US DOE Joint Genome Institute"/>
            <person name="Copeland A."/>
            <person name="Lucas S."/>
            <person name="Lapidus A."/>
            <person name="Barry K."/>
            <person name="Detter J.C."/>
            <person name="Glavina del Rio T."/>
            <person name="Hammon N."/>
            <person name="Israni S."/>
            <person name="Dalin E."/>
            <person name="Tice H."/>
            <person name="Pitluck S."/>
            <person name="Chertkov O."/>
            <person name="Brettin T."/>
            <person name="Bruce D."/>
            <person name="Han C."/>
            <person name="Tapia R."/>
            <person name="Gilna P."/>
            <person name="Schmutz J."/>
            <person name="Larimer F."/>
            <person name="Land M."/>
            <person name="Hauser L."/>
            <person name="Kyrpides N."/>
            <person name="Mikhailova N."/>
            <person name="Wu J.H.D."/>
            <person name="Newcomb M."/>
            <person name="Richardson P."/>
        </authorList>
    </citation>
    <scope>NUCLEOTIDE SEQUENCE [LARGE SCALE GENOMIC DNA]</scope>
    <source>
        <strain>ATCC 27405 / DSM 1237 / JCM 9322 / NBRC 103400 / NCIMB 10682 / NRRL B-4536 / VPI 7372</strain>
    </source>
</reference>
<dbReference type="EC" id="2.4.2.7" evidence="1"/>
<dbReference type="EMBL" id="CP000568">
    <property type="protein sequence ID" value="ABN52577.1"/>
    <property type="molecule type" value="Genomic_DNA"/>
</dbReference>
<dbReference type="RefSeq" id="WP_003517069.1">
    <property type="nucleotide sequence ID" value="NC_009012.1"/>
</dbReference>
<dbReference type="SMR" id="A3DF48"/>
<dbReference type="STRING" id="203119.Cthe_1345"/>
<dbReference type="GeneID" id="35805765"/>
<dbReference type="KEGG" id="cth:Cthe_1345"/>
<dbReference type="eggNOG" id="COG0503">
    <property type="taxonomic scope" value="Bacteria"/>
</dbReference>
<dbReference type="HOGENOM" id="CLU_063339_3_0_9"/>
<dbReference type="OrthoDB" id="9803963at2"/>
<dbReference type="UniPathway" id="UPA00588">
    <property type="reaction ID" value="UER00646"/>
</dbReference>
<dbReference type="Proteomes" id="UP000002145">
    <property type="component" value="Chromosome"/>
</dbReference>
<dbReference type="GO" id="GO:0005737">
    <property type="term" value="C:cytoplasm"/>
    <property type="evidence" value="ECO:0007669"/>
    <property type="project" value="UniProtKB-SubCell"/>
</dbReference>
<dbReference type="GO" id="GO:0002055">
    <property type="term" value="F:adenine binding"/>
    <property type="evidence" value="ECO:0007669"/>
    <property type="project" value="TreeGrafter"/>
</dbReference>
<dbReference type="GO" id="GO:0003999">
    <property type="term" value="F:adenine phosphoribosyltransferase activity"/>
    <property type="evidence" value="ECO:0007669"/>
    <property type="project" value="UniProtKB-UniRule"/>
</dbReference>
<dbReference type="GO" id="GO:0016208">
    <property type="term" value="F:AMP binding"/>
    <property type="evidence" value="ECO:0007669"/>
    <property type="project" value="TreeGrafter"/>
</dbReference>
<dbReference type="GO" id="GO:0006168">
    <property type="term" value="P:adenine salvage"/>
    <property type="evidence" value="ECO:0007669"/>
    <property type="project" value="InterPro"/>
</dbReference>
<dbReference type="GO" id="GO:0044209">
    <property type="term" value="P:AMP salvage"/>
    <property type="evidence" value="ECO:0007669"/>
    <property type="project" value="UniProtKB-UniRule"/>
</dbReference>
<dbReference type="GO" id="GO:0006166">
    <property type="term" value="P:purine ribonucleoside salvage"/>
    <property type="evidence" value="ECO:0007669"/>
    <property type="project" value="UniProtKB-KW"/>
</dbReference>
<dbReference type="CDD" id="cd06223">
    <property type="entry name" value="PRTases_typeI"/>
    <property type="match status" value="1"/>
</dbReference>
<dbReference type="FunFam" id="3.40.50.2020:FF:000004">
    <property type="entry name" value="Adenine phosphoribosyltransferase"/>
    <property type="match status" value="1"/>
</dbReference>
<dbReference type="Gene3D" id="3.40.50.2020">
    <property type="match status" value="1"/>
</dbReference>
<dbReference type="HAMAP" id="MF_00004">
    <property type="entry name" value="Aden_phosphoribosyltr"/>
    <property type="match status" value="1"/>
</dbReference>
<dbReference type="InterPro" id="IPR005764">
    <property type="entry name" value="Ade_phspho_trans"/>
</dbReference>
<dbReference type="InterPro" id="IPR000836">
    <property type="entry name" value="PRibTrfase_dom"/>
</dbReference>
<dbReference type="InterPro" id="IPR029057">
    <property type="entry name" value="PRTase-like"/>
</dbReference>
<dbReference type="InterPro" id="IPR050054">
    <property type="entry name" value="UPRTase/APRTase"/>
</dbReference>
<dbReference type="NCBIfam" id="TIGR01090">
    <property type="entry name" value="apt"/>
    <property type="match status" value="1"/>
</dbReference>
<dbReference type="NCBIfam" id="NF002633">
    <property type="entry name" value="PRK02304.1-2"/>
    <property type="match status" value="1"/>
</dbReference>
<dbReference type="NCBIfam" id="NF002634">
    <property type="entry name" value="PRK02304.1-3"/>
    <property type="match status" value="1"/>
</dbReference>
<dbReference type="NCBIfam" id="NF002636">
    <property type="entry name" value="PRK02304.1-5"/>
    <property type="match status" value="1"/>
</dbReference>
<dbReference type="PANTHER" id="PTHR32315">
    <property type="entry name" value="ADENINE PHOSPHORIBOSYLTRANSFERASE"/>
    <property type="match status" value="1"/>
</dbReference>
<dbReference type="PANTHER" id="PTHR32315:SF3">
    <property type="entry name" value="ADENINE PHOSPHORIBOSYLTRANSFERASE"/>
    <property type="match status" value="1"/>
</dbReference>
<dbReference type="Pfam" id="PF00156">
    <property type="entry name" value="Pribosyltran"/>
    <property type="match status" value="1"/>
</dbReference>
<dbReference type="SUPFAM" id="SSF53271">
    <property type="entry name" value="PRTase-like"/>
    <property type="match status" value="1"/>
</dbReference>
<dbReference type="PROSITE" id="PS00103">
    <property type="entry name" value="PUR_PYR_PR_TRANSFER"/>
    <property type="match status" value="1"/>
</dbReference>
<sequence length="171" mass="19080">MDLKAKLREVPDFPKEGINFIDITTVLQDPEALKECIDSMKKKVESFGEFDIIVGAESRGFIFGAPLAYALGKGFVPIRKKGKLPYKTISVEYELEYGTDILEMHIDAIKKGQRVVIVDDLLATGGTTKSNIKLVEQLGGEILGIVYFVELTFLNGREKLKGYNVESIVQY</sequence>